<evidence type="ECO:0000255" key="1">
    <source>
        <dbReference type="HAMAP-Rule" id="MF_00787"/>
    </source>
</evidence>
<protein>
    <recommendedName>
        <fullName evidence="1">Cobalt-precorrin-5B C(1)-methyltransferase</fullName>
        <ecNumber evidence="1">2.1.1.195</ecNumber>
    </recommendedName>
    <alternativeName>
        <fullName evidence="1">Cobalt-precorrin-6A synthase</fullName>
    </alternativeName>
</protein>
<dbReference type="EC" id="2.1.1.195" evidence="1"/>
<dbReference type="EMBL" id="AE004091">
    <property type="protein sequence ID" value="AAG06296.1"/>
    <property type="molecule type" value="Genomic_DNA"/>
</dbReference>
<dbReference type="PIR" id="F83281">
    <property type="entry name" value="F83281"/>
</dbReference>
<dbReference type="RefSeq" id="NP_251598.1">
    <property type="nucleotide sequence ID" value="NC_002516.2"/>
</dbReference>
<dbReference type="RefSeq" id="WP_003114022.1">
    <property type="nucleotide sequence ID" value="NZ_QZGE01000009.1"/>
</dbReference>
<dbReference type="SMR" id="Q9HZT9"/>
<dbReference type="STRING" id="208964.PA2908"/>
<dbReference type="PaxDb" id="208964-PA2908"/>
<dbReference type="GeneID" id="882679"/>
<dbReference type="KEGG" id="pae:PA2908"/>
<dbReference type="PATRIC" id="fig|208964.12.peg.3049"/>
<dbReference type="PseudoCAP" id="PA2908"/>
<dbReference type="HOGENOM" id="CLU_041273_0_0_6"/>
<dbReference type="InParanoid" id="Q9HZT9"/>
<dbReference type="OrthoDB" id="6439987at2"/>
<dbReference type="PhylomeDB" id="Q9HZT9"/>
<dbReference type="BioCyc" id="PAER208964:G1FZ6-2958-MONOMER"/>
<dbReference type="UniPathway" id="UPA00148">
    <property type="reaction ID" value="UER00227"/>
</dbReference>
<dbReference type="Proteomes" id="UP000002438">
    <property type="component" value="Chromosome"/>
</dbReference>
<dbReference type="GO" id="GO:0043780">
    <property type="term" value="F:cobalt-precorrin-5B C1-methyltransferase activity"/>
    <property type="evidence" value="ECO:0007669"/>
    <property type="project" value="RHEA"/>
</dbReference>
<dbReference type="GO" id="GO:0019251">
    <property type="term" value="P:anaerobic cobalamin biosynthetic process"/>
    <property type="evidence" value="ECO:0007669"/>
    <property type="project" value="UniProtKB-UniRule"/>
</dbReference>
<dbReference type="GO" id="GO:0032259">
    <property type="term" value="P:methylation"/>
    <property type="evidence" value="ECO:0007669"/>
    <property type="project" value="UniProtKB-KW"/>
</dbReference>
<dbReference type="Gene3D" id="3.30.2110.10">
    <property type="entry name" value="CbiD-like"/>
    <property type="match status" value="1"/>
</dbReference>
<dbReference type="HAMAP" id="MF_00787">
    <property type="entry name" value="CbiD"/>
    <property type="match status" value="1"/>
</dbReference>
<dbReference type="InterPro" id="IPR002748">
    <property type="entry name" value="CbiD"/>
</dbReference>
<dbReference type="InterPro" id="IPR036074">
    <property type="entry name" value="CbiD_sf"/>
</dbReference>
<dbReference type="NCBIfam" id="TIGR00312">
    <property type="entry name" value="cbiD"/>
    <property type="match status" value="1"/>
</dbReference>
<dbReference type="NCBIfam" id="NF000849">
    <property type="entry name" value="PRK00075.1-1"/>
    <property type="match status" value="1"/>
</dbReference>
<dbReference type="PANTHER" id="PTHR35863">
    <property type="entry name" value="COBALT-PRECORRIN-5B C(1)-METHYLTRANSFERASE"/>
    <property type="match status" value="1"/>
</dbReference>
<dbReference type="PANTHER" id="PTHR35863:SF1">
    <property type="entry name" value="COBALT-PRECORRIN-5B C(1)-METHYLTRANSFERASE"/>
    <property type="match status" value="1"/>
</dbReference>
<dbReference type="Pfam" id="PF01888">
    <property type="entry name" value="CbiD"/>
    <property type="match status" value="1"/>
</dbReference>
<dbReference type="PIRSF" id="PIRSF026782">
    <property type="entry name" value="CbiD"/>
    <property type="match status" value="1"/>
</dbReference>
<dbReference type="SUPFAM" id="SSF111342">
    <property type="entry name" value="CbiD-like"/>
    <property type="match status" value="1"/>
</dbReference>
<proteinExistence type="inferred from homology"/>
<accession>Q9HZT9</accession>
<comment type="function">
    <text evidence="1">Catalyzes the methylation of C-1 in cobalt-precorrin-5B to form cobalt-precorrin-6A.</text>
</comment>
<comment type="catalytic activity">
    <reaction evidence="1">
        <text>Co-precorrin-5B + S-adenosyl-L-methionine = Co-precorrin-6A + S-adenosyl-L-homocysteine</text>
        <dbReference type="Rhea" id="RHEA:26285"/>
        <dbReference type="ChEBI" id="CHEBI:57856"/>
        <dbReference type="ChEBI" id="CHEBI:59789"/>
        <dbReference type="ChEBI" id="CHEBI:60063"/>
        <dbReference type="ChEBI" id="CHEBI:60064"/>
        <dbReference type="EC" id="2.1.1.195"/>
    </reaction>
</comment>
<comment type="pathway">
    <text evidence="1">Cofactor biosynthesis; adenosylcobalamin biosynthesis; cob(II)yrinate a,c-diamide from sirohydrochlorin (anaerobic route): step 6/10.</text>
</comment>
<comment type="similarity">
    <text evidence="1">Belongs to the CbiD family.</text>
</comment>
<reference key="1">
    <citation type="journal article" date="2000" name="Nature">
        <title>Complete genome sequence of Pseudomonas aeruginosa PAO1, an opportunistic pathogen.</title>
        <authorList>
            <person name="Stover C.K."/>
            <person name="Pham X.-Q.T."/>
            <person name="Erwin A.L."/>
            <person name="Mizoguchi S.D."/>
            <person name="Warrener P."/>
            <person name="Hickey M.J."/>
            <person name="Brinkman F.S.L."/>
            <person name="Hufnagle W.O."/>
            <person name="Kowalik D.J."/>
            <person name="Lagrou M."/>
            <person name="Garber R.L."/>
            <person name="Goltry L."/>
            <person name="Tolentino E."/>
            <person name="Westbrock-Wadman S."/>
            <person name="Yuan Y."/>
            <person name="Brody L.L."/>
            <person name="Coulter S.N."/>
            <person name="Folger K.R."/>
            <person name="Kas A."/>
            <person name="Larbig K."/>
            <person name="Lim R.M."/>
            <person name="Smith K.A."/>
            <person name="Spencer D.H."/>
            <person name="Wong G.K.-S."/>
            <person name="Wu Z."/>
            <person name="Paulsen I.T."/>
            <person name="Reizer J."/>
            <person name="Saier M.H. Jr."/>
            <person name="Hancock R.E.W."/>
            <person name="Lory S."/>
            <person name="Olson M.V."/>
        </authorList>
    </citation>
    <scope>NUCLEOTIDE SEQUENCE [LARGE SCALE GENOMIC DNA]</scope>
    <source>
        <strain>ATCC 15692 / DSM 22644 / CIP 104116 / JCM 14847 / LMG 12228 / 1C / PRS 101 / PAO1</strain>
    </source>
</reference>
<feature type="chain" id="PRO_0000141678" description="Cobalt-precorrin-5B C(1)-methyltransferase">
    <location>
        <begin position="1"/>
        <end position="366"/>
    </location>
</feature>
<gene>
    <name evidence="1" type="primary">cbiD</name>
    <name type="ordered locus">PA2908</name>
</gene>
<organism>
    <name type="scientific">Pseudomonas aeruginosa (strain ATCC 15692 / DSM 22644 / CIP 104116 / JCM 14847 / LMG 12228 / 1C / PRS 101 / PAO1)</name>
    <dbReference type="NCBI Taxonomy" id="208964"/>
    <lineage>
        <taxon>Bacteria</taxon>
        <taxon>Pseudomonadati</taxon>
        <taxon>Pseudomonadota</taxon>
        <taxon>Gammaproteobacteria</taxon>
        <taxon>Pseudomonadales</taxon>
        <taxon>Pseudomonadaceae</taxon>
        <taxon>Pseudomonas</taxon>
    </lineage>
</organism>
<name>CBID_PSEAE</name>
<sequence>MREETPEQPAPLRSGYTTGSCATATSLAAARLLLGGTISDAVQIVLPKGQQVLMRLEFCRAWENGAEAGTLKDAGDDPDVTHGALVFARVRLSAEPGVRFHAGPGVGTVTRPGLTLAVGEPAINPVPRQMIERHLAQLAAERGYAGGFEVAIGVEGGAELALKTMNPRLGILGGLSILGTSGIVRPFSCSAYIASIHQGIDVARANGVRHIAACTGNASEDAMRRRYALPEIALIEMGDFAGAVLKHLRRAPVEKLSLCGGFGKISKLAGGHLDLHSRHSSIDLPQLAGWAAALGASTALQDSMRAANTSQQALAQAHAEGVALGDAVCAHALRFARGIVPTEVALEVFAIDRQGNLVGQACEERR</sequence>
<keyword id="KW-0169">Cobalamin biosynthesis</keyword>
<keyword id="KW-0489">Methyltransferase</keyword>
<keyword id="KW-1185">Reference proteome</keyword>
<keyword id="KW-0949">S-adenosyl-L-methionine</keyword>
<keyword id="KW-0808">Transferase</keyword>